<organism>
    <name type="scientific">Synechocystis sp. (strain ATCC 27184 / PCC 6803 / Kazusa)</name>
    <dbReference type="NCBI Taxonomy" id="1111708"/>
    <lineage>
        <taxon>Bacteria</taxon>
        <taxon>Bacillati</taxon>
        <taxon>Cyanobacteriota</taxon>
        <taxon>Cyanophyceae</taxon>
        <taxon>Synechococcales</taxon>
        <taxon>Merismopediaceae</taxon>
        <taxon>Synechocystis</taxon>
    </lineage>
</organism>
<feature type="chain" id="PRO_0000114390" description="Cell division protein FtsZ">
    <location>
        <begin position="1"/>
        <end position="430"/>
    </location>
</feature>
<feature type="region of interest" description="Disordered" evidence="2">
    <location>
        <begin position="374"/>
        <end position="418"/>
    </location>
</feature>
<feature type="binding site" evidence="1">
    <location>
        <begin position="76"/>
        <end position="80"/>
    </location>
    <ligand>
        <name>GTP</name>
        <dbReference type="ChEBI" id="CHEBI:37565"/>
    </ligand>
</feature>
<feature type="binding site" evidence="1">
    <location>
        <begin position="163"/>
        <end position="165"/>
    </location>
    <ligand>
        <name>GTP</name>
        <dbReference type="ChEBI" id="CHEBI:37565"/>
    </ligand>
</feature>
<feature type="binding site" evidence="1">
    <location>
        <position position="194"/>
    </location>
    <ligand>
        <name>GTP</name>
        <dbReference type="ChEBI" id="CHEBI:37565"/>
    </ligand>
</feature>
<feature type="binding site" evidence="1">
    <location>
        <position position="198"/>
    </location>
    <ligand>
        <name>GTP</name>
        <dbReference type="ChEBI" id="CHEBI:37565"/>
    </ligand>
</feature>
<feature type="binding site" evidence="1">
    <location>
        <position position="242"/>
    </location>
    <ligand>
        <name>GTP</name>
        <dbReference type="ChEBI" id="CHEBI:37565"/>
    </ligand>
</feature>
<reference key="1">
    <citation type="journal article" date="1996" name="DNA Res.">
        <title>Sequence analysis of the genome of the unicellular cyanobacterium Synechocystis sp. strain PCC6803. II. Sequence determination of the entire genome and assignment of potential protein-coding regions.</title>
        <authorList>
            <person name="Kaneko T."/>
            <person name="Sato S."/>
            <person name="Kotani H."/>
            <person name="Tanaka A."/>
            <person name="Asamizu E."/>
            <person name="Nakamura Y."/>
            <person name="Miyajima N."/>
            <person name="Hirosawa M."/>
            <person name="Sugiura M."/>
            <person name="Sasamoto S."/>
            <person name="Kimura T."/>
            <person name="Hosouchi T."/>
            <person name="Matsuno A."/>
            <person name="Muraki A."/>
            <person name="Nakazaki N."/>
            <person name="Naruo K."/>
            <person name="Okumura S."/>
            <person name="Shimpo S."/>
            <person name="Takeuchi C."/>
            <person name="Wada T."/>
            <person name="Watanabe A."/>
            <person name="Yamada M."/>
            <person name="Yasuda M."/>
            <person name="Tabata S."/>
        </authorList>
    </citation>
    <scope>NUCLEOTIDE SEQUENCE [LARGE SCALE GENOMIC DNA]</scope>
    <source>
        <strain>ATCC 27184 / PCC 6803 / Kazusa</strain>
    </source>
</reference>
<comment type="function">
    <text evidence="1">Essential cell division protein that forms a contractile ring structure (Z ring) at the future cell division site. The regulation of the ring assembly controls the timing and the location of cell division. One of the functions of the FtsZ ring is to recruit other cell division proteins to the septum to produce a new cell wall between the dividing cells. Binds GTP and shows GTPase activity.</text>
</comment>
<comment type="subunit">
    <text evidence="1">Homodimer. Polymerizes to form a dynamic ring structure in a strictly GTP-dependent manner. Interacts directly with several other division proteins.</text>
</comment>
<comment type="interaction">
    <interactant intactId="EBI-591904">
        <id>P73456</id>
    </interactant>
    <interactant intactId="EBI-591904">
        <id>P73456</id>
        <label>ftsZ</label>
    </interactant>
    <organismsDiffer>false</organismsDiffer>
    <experiments>2</experiments>
</comment>
<comment type="interaction">
    <interactant intactId="EBI-591904">
        <id>P73456</id>
    </interactant>
    <interactant intactId="EBI-591951">
        <id>Q55559</id>
        <label>sll0169</label>
    </interactant>
    <organismsDiffer>false</organismsDiffer>
    <experiments>2</experiments>
</comment>
<comment type="subcellular location">
    <subcellularLocation>
        <location evidence="1">Cytoplasm</location>
    </subcellularLocation>
    <text evidence="1">Assembles at midcell at the inner surface of the cytoplasmic membrane.</text>
</comment>
<comment type="similarity">
    <text evidence="1">Belongs to the FtsZ family.</text>
</comment>
<accession>P73456</accession>
<dbReference type="EMBL" id="BA000022">
    <property type="protein sequence ID" value="BAA17496.1"/>
    <property type="molecule type" value="Genomic_DNA"/>
</dbReference>
<dbReference type="PIR" id="S77393">
    <property type="entry name" value="S77393"/>
</dbReference>
<dbReference type="SMR" id="P73456"/>
<dbReference type="FunCoup" id="P73456">
    <property type="interactions" value="487"/>
</dbReference>
<dbReference type="IntAct" id="P73456">
    <property type="interactions" value="4"/>
</dbReference>
<dbReference type="STRING" id="1148.gene:10498361"/>
<dbReference type="PaxDb" id="1148-1652575"/>
<dbReference type="EnsemblBacteria" id="BAA17496">
    <property type="protein sequence ID" value="BAA17496"/>
    <property type="gene ID" value="BAA17496"/>
</dbReference>
<dbReference type="KEGG" id="syn:sll1633"/>
<dbReference type="eggNOG" id="COG0206">
    <property type="taxonomic scope" value="Bacteria"/>
</dbReference>
<dbReference type="InParanoid" id="P73456"/>
<dbReference type="PhylomeDB" id="P73456"/>
<dbReference type="Proteomes" id="UP000001425">
    <property type="component" value="Chromosome"/>
</dbReference>
<dbReference type="GO" id="GO:0032153">
    <property type="term" value="C:cell division site"/>
    <property type="evidence" value="ECO:0000318"/>
    <property type="project" value="GO_Central"/>
</dbReference>
<dbReference type="GO" id="GO:0005737">
    <property type="term" value="C:cytoplasm"/>
    <property type="evidence" value="ECO:0000318"/>
    <property type="project" value="GO_Central"/>
</dbReference>
<dbReference type="GO" id="GO:0005525">
    <property type="term" value="F:GTP binding"/>
    <property type="evidence" value="ECO:0000318"/>
    <property type="project" value="GO_Central"/>
</dbReference>
<dbReference type="GO" id="GO:0003924">
    <property type="term" value="F:GTPase activity"/>
    <property type="evidence" value="ECO:0000318"/>
    <property type="project" value="GO_Central"/>
</dbReference>
<dbReference type="GO" id="GO:0042802">
    <property type="term" value="F:identical protein binding"/>
    <property type="evidence" value="ECO:0000353"/>
    <property type="project" value="IntAct"/>
</dbReference>
<dbReference type="GO" id="GO:0051301">
    <property type="term" value="P:cell division"/>
    <property type="evidence" value="ECO:0000318"/>
    <property type="project" value="GO_Central"/>
</dbReference>
<dbReference type="GO" id="GO:0032506">
    <property type="term" value="P:cytokinetic process"/>
    <property type="evidence" value="ECO:0000314"/>
    <property type="project" value="UniProtKB"/>
</dbReference>
<dbReference type="GO" id="GO:0000917">
    <property type="term" value="P:division septum assembly"/>
    <property type="evidence" value="ECO:0007669"/>
    <property type="project" value="UniProtKB-KW"/>
</dbReference>
<dbReference type="GO" id="GO:0043093">
    <property type="term" value="P:FtsZ-dependent cytokinesis"/>
    <property type="evidence" value="ECO:0007669"/>
    <property type="project" value="UniProtKB-UniRule"/>
</dbReference>
<dbReference type="GO" id="GO:0051258">
    <property type="term" value="P:protein polymerization"/>
    <property type="evidence" value="ECO:0000314"/>
    <property type="project" value="UniProtKB"/>
</dbReference>
<dbReference type="CDD" id="cd02201">
    <property type="entry name" value="FtsZ_type1"/>
    <property type="match status" value="1"/>
</dbReference>
<dbReference type="FunFam" id="3.40.50.1440:FF:000023">
    <property type="entry name" value="Cell division protein FtsZ"/>
    <property type="match status" value="1"/>
</dbReference>
<dbReference type="FunFam" id="3.30.1330.20:FF:000007">
    <property type="entry name" value="Cell division protein ftsZ, putative"/>
    <property type="match status" value="1"/>
</dbReference>
<dbReference type="Gene3D" id="3.30.1330.20">
    <property type="entry name" value="Tubulin/FtsZ, C-terminal domain"/>
    <property type="match status" value="1"/>
</dbReference>
<dbReference type="Gene3D" id="3.40.50.1440">
    <property type="entry name" value="Tubulin/FtsZ, GTPase domain"/>
    <property type="match status" value="1"/>
</dbReference>
<dbReference type="HAMAP" id="MF_00909">
    <property type="entry name" value="FtsZ"/>
    <property type="match status" value="1"/>
</dbReference>
<dbReference type="InterPro" id="IPR000158">
    <property type="entry name" value="Cell_div_FtsZ"/>
</dbReference>
<dbReference type="InterPro" id="IPR020805">
    <property type="entry name" value="Cell_div_FtsZ_CS"/>
</dbReference>
<dbReference type="InterPro" id="IPR045061">
    <property type="entry name" value="FtsZ/CetZ"/>
</dbReference>
<dbReference type="InterPro" id="IPR024757">
    <property type="entry name" value="FtsZ_C"/>
</dbReference>
<dbReference type="InterPro" id="IPR008280">
    <property type="entry name" value="Tub_FtsZ_C"/>
</dbReference>
<dbReference type="InterPro" id="IPR037103">
    <property type="entry name" value="Tubulin/FtsZ-like_C"/>
</dbReference>
<dbReference type="InterPro" id="IPR018316">
    <property type="entry name" value="Tubulin/FtsZ_2-layer-sand-dom"/>
</dbReference>
<dbReference type="InterPro" id="IPR036525">
    <property type="entry name" value="Tubulin/FtsZ_GTPase_sf"/>
</dbReference>
<dbReference type="InterPro" id="IPR003008">
    <property type="entry name" value="Tubulin_FtsZ_GTPase"/>
</dbReference>
<dbReference type="NCBIfam" id="TIGR00065">
    <property type="entry name" value="ftsZ"/>
    <property type="match status" value="1"/>
</dbReference>
<dbReference type="PANTHER" id="PTHR30314">
    <property type="entry name" value="CELL DIVISION PROTEIN FTSZ-RELATED"/>
    <property type="match status" value="1"/>
</dbReference>
<dbReference type="PANTHER" id="PTHR30314:SF3">
    <property type="entry name" value="MITOCHONDRIAL DIVISION PROTEIN FSZA"/>
    <property type="match status" value="1"/>
</dbReference>
<dbReference type="Pfam" id="PF12327">
    <property type="entry name" value="FtsZ_C"/>
    <property type="match status" value="1"/>
</dbReference>
<dbReference type="Pfam" id="PF00091">
    <property type="entry name" value="Tubulin"/>
    <property type="match status" value="1"/>
</dbReference>
<dbReference type="PRINTS" id="PR00423">
    <property type="entry name" value="CELLDVISFTSZ"/>
</dbReference>
<dbReference type="SMART" id="SM00864">
    <property type="entry name" value="Tubulin"/>
    <property type="match status" value="1"/>
</dbReference>
<dbReference type="SMART" id="SM00865">
    <property type="entry name" value="Tubulin_C"/>
    <property type="match status" value="1"/>
</dbReference>
<dbReference type="SUPFAM" id="SSF55307">
    <property type="entry name" value="Tubulin C-terminal domain-like"/>
    <property type="match status" value="1"/>
</dbReference>
<dbReference type="SUPFAM" id="SSF52490">
    <property type="entry name" value="Tubulin nucleotide-binding domain-like"/>
    <property type="match status" value="1"/>
</dbReference>
<dbReference type="PROSITE" id="PS01134">
    <property type="entry name" value="FTSZ_1"/>
    <property type="match status" value="1"/>
</dbReference>
<dbReference type="PROSITE" id="PS01135">
    <property type="entry name" value="FTSZ_2"/>
    <property type="match status" value="1"/>
</dbReference>
<protein>
    <recommendedName>
        <fullName evidence="1">Cell division protein FtsZ</fullName>
    </recommendedName>
</protein>
<gene>
    <name evidence="1" type="primary">ftsZ</name>
    <name type="ordered locus">sll1633</name>
</gene>
<evidence type="ECO:0000255" key="1">
    <source>
        <dbReference type="HAMAP-Rule" id="MF_00909"/>
    </source>
</evidence>
<evidence type="ECO:0000256" key="2">
    <source>
        <dbReference type="SAM" id="MobiDB-lite"/>
    </source>
</evidence>
<name>FTSZ_SYNY3</name>
<keyword id="KW-0131">Cell cycle</keyword>
<keyword id="KW-0132">Cell division</keyword>
<keyword id="KW-0963">Cytoplasm</keyword>
<keyword id="KW-0342">GTP-binding</keyword>
<keyword id="KW-0547">Nucleotide-binding</keyword>
<keyword id="KW-1185">Reference proteome</keyword>
<keyword id="KW-0717">Septation</keyword>
<proteinExistence type="evidence at protein level"/>
<sequence>MTLNNDLPLNNIGFTGSGLNDGTEGLDDLFSSSIVDNEPLEALVETPTFASPSPNLKRDQIVPSNIAKIKVIGVGGGGCNAVNRMIASGVTGIDFWAINTDSQALTNTNAPDCIQIGQKLTRGLGAGGNPAIGQKAAEESRDEIARSLEGTDLVFITAGMGGGTGTGAAPIVAEVAKEMGCLTVGIVTRPFTFEGRRRAKQAEEGINALQSRVDTLIVIPNNQLLSVIPAETPLQEAFRVADDILRQGVQGISDIIIIPGLVNVDFADVRAVMADAGSALMGIGVGSGKSRAKEAATAAISSPLLESSIQGAKGVVFNVTGGTDLTLHEVNVAAEIIYEVVDADANIIFGAVIDDRLQGEMRITVIATGFNGEKEKPQAKTSSKPVLSGPPAGVETVPSTTTPEDPLGEIPMAPELDIPDFLQKRRFPRR</sequence>